<name>TDH_ECOLI</name>
<organism>
    <name type="scientific">Escherichia coli (strain K12)</name>
    <dbReference type="NCBI Taxonomy" id="83333"/>
    <lineage>
        <taxon>Bacteria</taxon>
        <taxon>Pseudomonadati</taxon>
        <taxon>Pseudomonadota</taxon>
        <taxon>Gammaproteobacteria</taxon>
        <taxon>Enterobacterales</taxon>
        <taxon>Enterobacteriaceae</taxon>
        <taxon>Escherichia</taxon>
    </lineage>
</organism>
<feature type="chain" id="PRO_0000160837" description="L-threonine 3-dehydrogenase">
    <location>
        <begin position="1"/>
        <end position="341"/>
    </location>
</feature>
<feature type="active site" description="Charge relay system" evidence="1">
    <location>
        <position position="40"/>
    </location>
</feature>
<feature type="active site" description="Charge relay system" evidence="1">
    <location>
        <position position="43"/>
    </location>
</feature>
<feature type="binding site" evidence="1 8">
    <location>
        <position position="38"/>
    </location>
    <ligand>
        <name>Zn(2+)</name>
        <dbReference type="ChEBI" id="CHEBI:29105"/>
        <label>1</label>
        <note>catalytic</note>
    </ligand>
</feature>
<feature type="binding site" evidence="1">
    <location>
        <position position="63"/>
    </location>
    <ligand>
        <name>Zn(2+)</name>
        <dbReference type="ChEBI" id="CHEBI:29105"/>
        <label>1</label>
        <note>catalytic</note>
    </ligand>
</feature>
<feature type="binding site" evidence="1">
    <location>
        <position position="64"/>
    </location>
    <ligand>
        <name>Zn(2+)</name>
        <dbReference type="ChEBI" id="CHEBI:29105"/>
        <label>1</label>
        <note>catalytic</note>
    </ligand>
</feature>
<feature type="binding site" evidence="1">
    <location>
        <position position="93"/>
    </location>
    <ligand>
        <name>Zn(2+)</name>
        <dbReference type="ChEBI" id="CHEBI:29105"/>
        <label>2</label>
    </ligand>
</feature>
<feature type="binding site" evidence="1">
    <location>
        <position position="96"/>
    </location>
    <ligand>
        <name>Zn(2+)</name>
        <dbReference type="ChEBI" id="CHEBI:29105"/>
        <label>2</label>
    </ligand>
</feature>
<feature type="binding site" evidence="1">
    <location>
        <position position="99"/>
    </location>
    <ligand>
        <name>Zn(2+)</name>
        <dbReference type="ChEBI" id="CHEBI:29105"/>
        <label>2</label>
    </ligand>
</feature>
<feature type="binding site" evidence="1">
    <location>
        <position position="107"/>
    </location>
    <ligand>
        <name>Zn(2+)</name>
        <dbReference type="ChEBI" id="CHEBI:29105"/>
        <label>2</label>
    </ligand>
</feature>
<feature type="binding site" evidence="1">
    <location>
        <position position="175"/>
    </location>
    <ligand>
        <name>NAD(+)</name>
        <dbReference type="ChEBI" id="CHEBI:57540"/>
    </ligand>
</feature>
<feature type="binding site" evidence="1">
    <location>
        <position position="195"/>
    </location>
    <ligand>
        <name>NAD(+)</name>
        <dbReference type="ChEBI" id="CHEBI:57540"/>
    </ligand>
</feature>
<feature type="binding site" evidence="1">
    <location>
        <position position="200"/>
    </location>
    <ligand>
        <name>NAD(+)</name>
        <dbReference type="ChEBI" id="CHEBI:57540"/>
    </ligand>
</feature>
<feature type="binding site" evidence="1">
    <location>
        <begin position="262"/>
        <end position="264"/>
    </location>
    <ligand>
        <name>NAD(+)</name>
        <dbReference type="ChEBI" id="CHEBI:57540"/>
    </ligand>
</feature>
<feature type="binding site" evidence="1">
    <location>
        <begin position="286"/>
        <end position="287"/>
    </location>
    <ligand>
        <name>NAD(+)</name>
        <dbReference type="ChEBI" id="CHEBI:57540"/>
    </ligand>
</feature>
<feature type="site" description="Important for catalytic activity for the proton relay mechanism but does not participate directly in the coordination of zinc atom" evidence="1">
    <location>
        <position position="148"/>
    </location>
</feature>
<feature type="mutagenesis site" description="Shows only 1% of wild-type catalytic activity. This mutant can be stimulated to the wild-type activity level after incubation with Zn(+)." evidence="4">
    <original>C</original>
    <variation>D</variation>
    <location>
        <position position="38"/>
    </location>
</feature>
<feature type="mutagenesis site" description="Loss of catalytic activity. This mutant cannot be stimulated to the wild-type activity level after incubation with Zn(+)." evidence="4">
    <original>C</original>
    <variation>S</variation>
    <location>
        <position position="38"/>
    </location>
</feature>
<proteinExistence type="evidence at protein level"/>
<accession>P07913</accession>
<accession>Q2M7T0</accession>
<protein>
    <recommendedName>
        <fullName evidence="1">L-threonine 3-dehydrogenase</fullName>
        <shortName evidence="1 7">TDH</shortName>
        <ecNumber evidence="1 3">1.1.1.103</ecNumber>
    </recommendedName>
    <alternativeName>
        <fullName evidence="5 6">L-threonine dehydrogenase</fullName>
    </alternativeName>
</protein>
<reference key="1">
    <citation type="journal article" date="1989" name="J. Biol. Chem.">
        <title>The primary structure of Escherichia coli L-threonine dehydrogenase.</title>
        <authorList>
            <person name="Aronson B.D."/>
            <person name="Somerville R.L."/>
            <person name="Epperly B.R."/>
            <person name="Dekker E.E."/>
        </authorList>
    </citation>
    <scope>NUCLEOTIDE SEQUENCE [GENOMIC DNA]</scope>
    <scope>PROTEIN SEQUENCE OF 1-20 AND 149-153</scope>
    <source>
        <strain>K12</strain>
    </source>
</reference>
<reference key="2">
    <citation type="journal article" date="1994" name="Nucleic Acids Res.">
        <title>Analysis of the Escherichia coli genome. V. DNA sequence of the region from 76.0 to 81.5 minutes.</title>
        <authorList>
            <person name="Sofia H.J."/>
            <person name="Burland V."/>
            <person name="Daniels D.L."/>
            <person name="Plunkett G. III"/>
            <person name="Blattner F.R."/>
        </authorList>
    </citation>
    <scope>NUCLEOTIDE SEQUENCE [LARGE SCALE GENOMIC DNA]</scope>
    <source>
        <strain>K12 / MG1655 / ATCC 47076</strain>
    </source>
</reference>
<reference key="3">
    <citation type="journal article" date="1997" name="Science">
        <title>The complete genome sequence of Escherichia coli K-12.</title>
        <authorList>
            <person name="Blattner F.R."/>
            <person name="Plunkett G. III"/>
            <person name="Bloch C.A."/>
            <person name="Perna N.T."/>
            <person name="Burland V."/>
            <person name="Riley M."/>
            <person name="Collado-Vides J."/>
            <person name="Glasner J.D."/>
            <person name="Rode C.K."/>
            <person name="Mayhew G.F."/>
            <person name="Gregor J."/>
            <person name="Davis N.W."/>
            <person name="Kirkpatrick H.A."/>
            <person name="Goeden M.A."/>
            <person name="Rose D.J."/>
            <person name="Mau B."/>
            <person name="Shao Y."/>
        </authorList>
    </citation>
    <scope>NUCLEOTIDE SEQUENCE [LARGE SCALE GENOMIC DNA]</scope>
    <source>
        <strain>K12 / MG1655 / ATCC 47076</strain>
    </source>
</reference>
<reference key="4">
    <citation type="journal article" date="2006" name="Mol. Syst. Biol.">
        <title>Highly accurate genome sequences of Escherichia coli K-12 strains MG1655 and W3110.</title>
        <authorList>
            <person name="Hayashi K."/>
            <person name="Morooka N."/>
            <person name="Yamamoto Y."/>
            <person name="Fujita K."/>
            <person name="Isono K."/>
            <person name="Choi S."/>
            <person name="Ohtsubo E."/>
            <person name="Baba T."/>
            <person name="Wanner B.L."/>
            <person name="Mori H."/>
            <person name="Horiuchi T."/>
        </authorList>
    </citation>
    <scope>NUCLEOTIDE SEQUENCE [LARGE SCALE GENOMIC DNA]</scope>
    <source>
        <strain>K12 / W3110 / ATCC 27325 / DSM 5911</strain>
    </source>
</reference>
<reference key="5">
    <citation type="journal article" date="1991" name="J. Biol. Chem.">
        <title>L-threonine dehydrogenase from Escherichia coli. Identification of an active site cysteine residue and metal ion studies.</title>
        <authorList>
            <person name="Epperly B.R."/>
            <person name="Dekker E.E."/>
        </authorList>
    </citation>
    <scope>PARTIAL PROTEIN SEQUENCE</scope>
    <scope>COFACTOR</scope>
    <scope>ACTIVITY REGULATION</scope>
</reference>
<reference key="6">
    <citation type="journal article" date="1981" name="J. Biol. Chem.">
        <title>L-threonine dehydrogenase. Purification and properties of the homogeneous enzyme from Escherichia coli K-12.</title>
        <authorList>
            <person name="Boylan S.A."/>
            <person name="Dekker E.E."/>
        </authorList>
    </citation>
    <scope>FUNCTION</scope>
    <scope>CATALYTIC ACTIVITY</scope>
    <scope>SUBSTRATE SPECIFICITY</scope>
    <scope>BIOPHYSICOCHEMICAL PROPERTIES</scope>
    <scope>SUBUNIT</scope>
    <source>
        <strain>K12</strain>
    </source>
</reference>
<reference key="7">
    <citation type="journal article" date="1997" name="Electrophoresis">
        <title>Escherichia coli proteome analysis using the gene-protein database.</title>
        <authorList>
            <person name="VanBogelen R.A."/>
            <person name="Abshire K.Z."/>
            <person name="Moldover B."/>
            <person name="Olson E.R."/>
            <person name="Neidhardt F.C."/>
        </authorList>
    </citation>
    <scope>IDENTIFICATION BY 2D-GEL</scope>
</reference>
<reference key="8">
    <citation type="journal article" date="1998" name="Arch. Biochem. Biophys.">
        <title>Investigation of a catalytic zinc binding site in Escherichia coli L-threonine dehydrogenase by site-directed mutagenesis of cysteine-38.</title>
        <authorList>
            <person name="Johnson A.R."/>
            <person name="Chen Y.W."/>
            <person name="Dekker E.E."/>
        </authorList>
    </citation>
    <scope>MUTAGENESIS OF CYS-38</scope>
    <scope>COFACTOR</scope>
</reference>
<dbReference type="EC" id="1.1.1.103" evidence="1 3"/>
<dbReference type="EMBL" id="X06690">
    <property type="protein sequence ID" value="CAA29884.1"/>
    <property type="molecule type" value="Genomic_DNA"/>
</dbReference>
<dbReference type="EMBL" id="U00039">
    <property type="protein sequence ID" value="AAB18593.1"/>
    <property type="molecule type" value="Genomic_DNA"/>
</dbReference>
<dbReference type="EMBL" id="U00096">
    <property type="protein sequence ID" value="AAC76640.1"/>
    <property type="molecule type" value="Genomic_DNA"/>
</dbReference>
<dbReference type="EMBL" id="AP009048">
    <property type="protein sequence ID" value="BAE77676.1"/>
    <property type="molecule type" value="Genomic_DNA"/>
</dbReference>
<dbReference type="PIR" id="A33276">
    <property type="entry name" value="DEECTH"/>
</dbReference>
<dbReference type="RefSeq" id="NP_418073.1">
    <property type="nucleotide sequence ID" value="NC_000913.3"/>
</dbReference>
<dbReference type="RefSeq" id="WP_000646007.1">
    <property type="nucleotide sequence ID" value="NZ_LN832404.1"/>
</dbReference>
<dbReference type="SMR" id="P07913"/>
<dbReference type="BioGRID" id="4263307">
    <property type="interactions" value="33"/>
</dbReference>
<dbReference type="BioGRID" id="852446">
    <property type="interactions" value="1"/>
</dbReference>
<dbReference type="DIP" id="DIP-6855N"/>
<dbReference type="FunCoup" id="P07913">
    <property type="interactions" value="285"/>
</dbReference>
<dbReference type="IntAct" id="P07913">
    <property type="interactions" value="6"/>
</dbReference>
<dbReference type="STRING" id="511145.b3616"/>
<dbReference type="jPOST" id="P07913"/>
<dbReference type="PaxDb" id="511145-b3616"/>
<dbReference type="EnsemblBacteria" id="AAC76640">
    <property type="protein sequence ID" value="AAC76640"/>
    <property type="gene ID" value="b3616"/>
</dbReference>
<dbReference type="GeneID" id="948139"/>
<dbReference type="KEGG" id="ecj:JW3591"/>
<dbReference type="KEGG" id="eco:b3616"/>
<dbReference type="KEGG" id="ecoc:C3026_19605"/>
<dbReference type="PATRIC" id="fig|1411691.4.peg.3090"/>
<dbReference type="EchoBASE" id="EB0986"/>
<dbReference type="eggNOG" id="COG1063">
    <property type="taxonomic scope" value="Bacteria"/>
</dbReference>
<dbReference type="HOGENOM" id="CLU_026673_11_0_6"/>
<dbReference type="InParanoid" id="P07913"/>
<dbReference type="OMA" id="FETWYAM"/>
<dbReference type="OrthoDB" id="9773078at2"/>
<dbReference type="PhylomeDB" id="P07913"/>
<dbReference type="BioCyc" id="EcoCyc:THREODEHYD-MONOMER"/>
<dbReference type="BioCyc" id="MetaCyc:THREODEHYD-MONOMER"/>
<dbReference type="BRENDA" id="1.1.1.103">
    <property type="organism ID" value="2026"/>
</dbReference>
<dbReference type="SABIO-RK" id="P07913"/>
<dbReference type="UniPathway" id="UPA00046">
    <property type="reaction ID" value="UER00505"/>
</dbReference>
<dbReference type="PRO" id="PR:P07913"/>
<dbReference type="Proteomes" id="UP000000625">
    <property type="component" value="Chromosome"/>
</dbReference>
<dbReference type="GO" id="GO:0005737">
    <property type="term" value="C:cytoplasm"/>
    <property type="evidence" value="ECO:0000314"/>
    <property type="project" value="EcoliWiki"/>
</dbReference>
<dbReference type="GO" id="GO:0005829">
    <property type="term" value="C:cytosol"/>
    <property type="evidence" value="ECO:0000314"/>
    <property type="project" value="EcoCyc"/>
</dbReference>
<dbReference type="GO" id="GO:0046870">
    <property type="term" value="F:cadmium ion binding"/>
    <property type="evidence" value="ECO:0000314"/>
    <property type="project" value="EcoliWiki"/>
</dbReference>
<dbReference type="GO" id="GO:0008198">
    <property type="term" value="F:ferrous iron binding"/>
    <property type="evidence" value="ECO:0000314"/>
    <property type="project" value="EcoCyc"/>
</dbReference>
<dbReference type="GO" id="GO:0008743">
    <property type="term" value="F:L-threonine 3-dehydrogenase activity"/>
    <property type="evidence" value="ECO:0000314"/>
    <property type="project" value="EcoCyc"/>
</dbReference>
<dbReference type="GO" id="GO:0030145">
    <property type="term" value="F:manganese ion binding"/>
    <property type="evidence" value="ECO:0000314"/>
    <property type="project" value="EcoliWiki"/>
</dbReference>
<dbReference type="GO" id="GO:0016491">
    <property type="term" value="F:oxidoreductase activity"/>
    <property type="evidence" value="ECO:0000314"/>
    <property type="project" value="EcoliWiki"/>
</dbReference>
<dbReference type="GO" id="GO:0008270">
    <property type="term" value="F:zinc ion binding"/>
    <property type="evidence" value="ECO:0000314"/>
    <property type="project" value="EcoliWiki"/>
</dbReference>
<dbReference type="GO" id="GO:0006564">
    <property type="term" value="P:L-serine biosynthetic process"/>
    <property type="evidence" value="ECO:0000316"/>
    <property type="project" value="EcoliWiki"/>
</dbReference>
<dbReference type="GO" id="GO:0019518">
    <property type="term" value="P:L-threonine catabolic process to glycine"/>
    <property type="evidence" value="ECO:0007669"/>
    <property type="project" value="UniProtKB-UniPathway"/>
</dbReference>
<dbReference type="GO" id="GO:0006567">
    <property type="term" value="P:threonine catabolic process"/>
    <property type="evidence" value="ECO:0000315"/>
    <property type="project" value="EcoCyc"/>
</dbReference>
<dbReference type="FunFam" id="3.40.50.720:FF:000059">
    <property type="entry name" value="L-threonine 3-dehydrogenase"/>
    <property type="match status" value="1"/>
</dbReference>
<dbReference type="Gene3D" id="3.90.180.10">
    <property type="entry name" value="Medium-chain alcohol dehydrogenases, catalytic domain"/>
    <property type="match status" value="1"/>
</dbReference>
<dbReference type="Gene3D" id="3.40.50.720">
    <property type="entry name" value="NAD(P)-binding Rossmann-like Domain"/>
    <property type="match status" value="1"/>
</dbReference>
<dbReference type="HAMAP" id="MF_00627">
    <property type="entry name" value="Thr_dehydrog"/>
    <property type="match status" value="1"/>
</dbReference>
<dbReference type="InterPro" id="IPR013149">
    <property type="entry name" value="ADH-like_C"/>
</dbReference>
<dbReference type="InterPro" id="IPR013154">
    <property type="entry name" value="ADH-like_N"/>
</dbReference>
<dbReference type="InterPro" id="IPR002328">
    <property type="entry name" value="ADH_Zn_CS"/>
</dbReference>
<dbReference type="InterPro" id="IPR011032">
    <property type="entry name" value="GroES-like_sf"/>
</dbReference>
<dbReference type="InterPro" id="IPR004627">
    <property type="entry name" value="L-Threonine_3-DHase"/>
</dbReference>
<dbReference type="InterPro" id="IPR036291">
    <property type="entry name" value="NAD(P)-bd_dom_sf"/>
</dbReference>
<dbReference type="InterPro" id="IPR020843">
    <property type="entry name" value="PKS_ER"/>
</dbReference>
<dbReference type="InterPro" id="IPR050129">
    <property type="entry name" value="Zn_alcohol_dh"/>
</dbReference>
<dbReference type="NCBIfam" id="NF003808">
    <property type="entry name" value="PRK05396.1"/>
    <property type="match status" value="1"/>
</dbReference>
<dbReference type="NCBIfam" id="TIGR00692">
    <property type="entry name" value="tdh"/>
    <property type="match status" value="1"/>
</dbReference>
<dbReference type="PANTHER" id="PTHR43401">
    <property type="entry name" value="L-THREONINE 3-DEHYDROGENASE"/>
    <property type="match status" value="1"/>
</dbReference>
<dbReference type="PANTHER" id="PTHR43401:SF2">
    <property type="entry name" value="L-THREONINE 3-DEHYDROGENASE"/>
    <property type="match status" value="1"/>
</dbReference>
<dbReference type="Pfam" id="PF08240">
    <property type="entry name" value="ADH_N"/>
    <property type="match status" value="1"/>
</dbReference>
<dbReference type="Pfam" id="PF00107">
    <property type="entry name" value="ADH_zinc_N"/>
    <property type="match status" value="1"/>
</dbReference>
<dbReference type="SMART" id="SM00829">
    <property type="entry name" value="PKS_ER"/>
    <property type="match status" value="1"/>
</dbReference>
<dbReference type="SUPFAM" id="SSF50129">
    <property type="entry name" value="GroES-like"/>
    <property type="match status" value="1"/>
</dbReference>
<dbReference type="SUPFAM" id="SSF51735">
    <property type="entry name" value="NAD(P)-binding Rossmann-fold domains"/>
    <property type="match status" value="1"/>
</dbReference>
<dbReference type="PROSITE" id="PS00059">
    <property type="entry name" value="ADH_ZINC"/>
    <property type="match status" value="1"/>
</dbReference>
<sequence length="341" mass="37239">MKALSKLKAEEGIWMTDVPVPELGHNDLLIKIRKTAICGTDVHIYNWDEWSQKTIPVPMVVGHEYVGEVVGIGQEVKGFKIGDRVSGEGHITCGHCRNCRGGRTHLCRNTIGVGVNRPGCFAEYLVIPAFNAFKIPDNISDDLAAIFDPFGNAVHTALSFDLVGEDVLVSGAGPIGIMAAAVAKHVGARNVVITDVNEYRLELARKMGITRAVNVAKENLNDVMAELGMTEGFDVGLEMSGAPPAFRTMLDTMNHGGRIAMLGIPPSDMSIDWTKVIFKGLFIKGIYGREMFETWYKMAALIQSGLDLSPIITHRFSIDDFQKGFDAMRSGQSGKVILSWD</sequence>
<evidence type="ECO:0000255" key="1">
    <source>
        <dbReference type="HAMAP-Rule" id="MF_00627"/>
    </source>
</evidence>
<evidence type="ECO:0000269" key="2">
    <source>
    </source>
</evidence>
<evidence type="ECO:0000269" key="3">
    <source>
    </source>
</evidence>
<evidence type="ECO:0000269" key="4">
    <source>
    </source>
</evidence>
<evidence type="ECO:0000303" key="5">
    <source>
    </source>
</evidence>
<evidence type="ECO:0000303" key="6">
    <source>
    </source>
</evidence>
<evidence type="ECO:0000303" key="7">
    <source>
    </source>
</evidence>
<evidence type="ECO:0000305" key="8">
    <source>
    </source>
</evidence>
<comment type="function">
    <text evidence="3">Catalyzes the NAD(+)-dependent oxidation of L-threonine to 2-amino-3-ketobutyrate. To a lesser extent, also catalyzes the oxidation of D-allo-threonine and L-threonine amide, but not that of D-threonine and L-allothreonine. Cannot utilize NADP(+) instead of NAD(+).</text>
</comment>
<comment type="catalytic activity">
    <reaction evidence="1 3">
        <text>L-threonine + NAD(+) = (2S)-2-amino-3-oxobutanoate + NADH + H(+)</text>
        <dbReference type="Rhea" id="RHEA:13161"/>
        <dbReference type="ChEBI" id="CHEBI:15378"/>
        <dbReference type="ChEBI" id="CHEBI:57540"/>
        <dbReference type="ChEBI" id="CHEBI:57926"/>
        <dbReference type="ChEBI" id="CHEBI:57945"/>
        <dbReference type="ChEBI" id="CHEBI:78948"/>
        <dbReference type="EC" id="1.1.1.103"/>
    </reaction>
</comment>
<comment type="cofactor">
    <cofactor evidence="1 2 8">
        <name>Zn(2+)</name>
        <dbReference type="ChEBI" id="CHEBI:29105"/>
    </cofactor>
    <cofactor evidence="2">
        <name>Co(2+)</name>
        <dbReference type="ChEBI" id="CHEBI:48828"/>
    </cofactor>
    <cofactor evidence="2">
        <name>Cd(2+)</name>
        <dbReference type="ChEBI" id="CHEBI:48775"/>
    </cofactor>
    <text evidence="1 2 8">Binds 2 Zn(2+) ions per subunit. Co(2+) and Cd(2+) can exchange for Zn(2+) (PubMed:2007567). Probably contains one structural ion and one catalytic ion that seems to be less tightly bound at the site (PubMed:9784233).</text>
</comment>
<comment type="activity regulation">
    <text evidence="2">Is totally inhibited by EDTA in vitro.</text>
</comment>
<comment type="biophysicochemical properties">
    <kinetics>
        <KM evidence="3">1.43 mM for L-threonine (at 37 degrees Celsius and pH 8.4)</KM>
        <KM evidence="3">0.19 mM for NAD(+) (at 37 degrees Celsius and pH 8.4)</KM>
        <Vmax evidence="3">57.0 umol/min/mg enzyme for the NAD(+) oxidation of L-threonine</Vmax>
    </kinetics>
    <phDependence>
        <text evidence="3">Optimum pH is 10.3. At pH 9.0 and 11.0, the activity is 35% and only 6%, respectively, of the optimal level.</text>
    </phDependence>
</comment>
<comment type="pathway">
    <text evidence="1">Amino-acid degradation; L-threonine degradation via oxydo-reductase pathway; glycine from L-threonine: step 1/2.</text>
</comment>
<comment type="subunit">
    <text evidence="3">Homotetramer.</text>
</comment>
<comment type="subcellular location">
    <subcellularLocation>
        <location evidence="1">Cytoplasm</location>
    </subcellularLocation>
</comment>
<comment type="similarity">
    <text evidence="1">Belongs to the zinc-containing alcohol dehydrogenase family.</text>
</comment>
<gene>
    <name evidence="5" type="primary">tdh</name>
    <name type="ordered locus">b3616</name>
    <name type="ordered locus">JW3591</name>
</gene>
<keyword id="KW-0170">Cobalt</keyword>
<keyword id="KW-0963">Cytoplasm</keyword>
<keyword id="KW-0903">Direct protein sequencing</keyword>
<keyword id="KW-0479">Metal-binding</keyword>
<keyword id="KW-0520">NAD</keyword>
<keyword id="KW-0560">Oxidoreductase</keyword>
<keyword id="KW-1185">Reference proteome</keyword>
<keyword id="KW-0862">Zinc</keyword>